<proteinExistence type="evidence at transcript level"/>
<accession>B4F739</accession>
<name>FBSP1_XENTR</name>
<reference key="1">
    <citation type="submission" date="2008-07" db="EMBL/GenBank/DDBJ databases">
        <authorList>
            <consortium name="NIH - Xenopus Gene Collection (XGC) project"/>
        </authorList>
    </citation>
    <scope>NUCLEOTIDE SEQUENCE [LARGE SCALE MRNA] (ISOFORM 2)</scope>
    <source>
        <tissue>Embryo</tissue>
    </source>
</reference>
<reference key="2">
    <citation type="submission" date="2005-08" db="EMBL/GenBank/DDBJ databases">
        <title>DOE Joint Genome Institute Xenopus tropicalis EST project.</title>
        <authorList>
            <person name="Richardson P."/>
            <person name="Lucas S."/>
            <person name="Rokhsar D."/>
            <person name="Detter J.C."/>
            <person name="Ng D.C."/>
            <person name="Brokstein P."/>
            <person name="Lindquist E.A."/>
        </authorList>
    </citation>
    <scope>NUCLEOTIDE SEQUENCE [LARGE SCALE MRNA] OF 60-282 (ISOFORM 1)</scope>
    <source>
        <tissue>Embryo</tissue>
    </source>
</reference>
<gene>
    <name type="primary">fbxo45</name>
</gene>
<dbReference type="EMBL" id="BC168120">
    <property type="protein sequence ID" value="AAI68120.1"/>
    <property type="molecule type" value="mRNA"/>
</dbReference>
<dbReference type="EMBL" id="CX453823">
    <property type="status" value="NOT_ANNOTATED_CDS"/>
    <property type="molecule type" value="mRNA"/>
</dbReference>
<dbReference type="RefSeq" id="NP_001135592.1">
    <molecule id="B4F739-2"/>
    <property type="nucleotide sequence ID" value="NM_001142120.1"/>
</dbReference>
<dbReference type="RefSeq" id="XP_012825639.1">
    <molecule id="B4F739-1"/>
    <property type="nucleotide sequence ID" value="XM_012970185.3"/>
</dbReference>
<dbReference type="SMR" id="B4F739"/>
<dbReference type="FunCoup" id="B4F739">
    <property type="interactions" value="911"/>
</dbReference>
<dbReference type="STRING" id="8364.ENSXETP00000017883"/>
<dbReference type="PaxDb" id="8364-ENSXETP00000025830"/>
<dbReference type="GeneID" id="100216147"/>
<dbReference type="KEGG" id="xtr:100216147"/>
<dbReference type="AGR" id="Xenbase:XB-GENE-972343"/>
<dbReference type="CTD" id="200933"/>
<dbReference type="Xenbase" id="XB-GENE-972343">
    <property type="gene designation" value="fbxo45"/>
</dbReference>
<dbReference type="eggNOG" id="KOG3953">
    <property type="taxonomic scope" value="Eukaryota"/>
</dbReference>
<dbReference type="HOGENOM" id="CLU_046756_1_0_1"/>
<dbReference type="InParanoid" id="B4F739"/>
<dbReference type="OMA" id="ATKRASM"/>
<dbReference type="OrthoDB" id="2398163at2759"/>
<dbReference type="PhylomeDB" id="B4F739"/>
<dbReference type="TreeFam" id="TF312822"/>
<dbReference type="UniPathway" id="UPA00143"/>
<dbReference type="Proteomes" id="UP000008143">
    <property type="component" value="Chromosome 5"/>
</dbReference>
<dbReference type="Bgee" id="ENSXETG00000040149">
    <property type="expression patterns" value="Expressed in 4-cell stage embryo and 12 other cell types or tissues"/>
</dbReference>
<dbReference type="GO" id="GO:0016567">
    <property type="term" value="P:protein ubiquitination"/>
    <property type="evidence" value="ECO:0007669"/>
    <property type="project" value="UniProtKB-UniPathway"/>
</dbReference>
<dbReference type="GO" id="GO:0006511">
    <property type="term" value="P:ubiquitin-dependent protein catabolic process"/>
    <property type="evidence" value="ECO:0007669"/>
    <property type="project" value="UniProtKB-ARBA"/>
</dbReference>
<dbReference type="CDD" id="cd22111">
    <property type="entry name" value="F-box_FBXO45"/>
    <property type="match status" value="1"/>
</dbReference>
<dbReference type="CDD" id="cd12907">
    <property type="entry name" value="SPRY_Fbox"/>
    <property type="match status" value="1"/>
</dbReference>
<dbReference type="FunFam" id="1.20.1280.50:FF:000024">
    <property type="entry name" value="F-box/SPRY domain-containing protein 1"/>
    <property type="match status" value="1"/>
</dbReference>
<dbReference type="FunFam" id="2.60.120.920:FF:000017">
    <property type="entry name" value="F-box/SPRY domain-containing protein 1"/>
    <property type="match status" value="1"/>
</dbReference>
<dbReference type="Gene3D" id="1.20.1280.50">
    <property type="match status" value="1"/>
</dbReference>
<dbReference type="Gene3D" id="2.60.120.920">
    <property type="match status" value="1"/>
</dbReference>
<dbReference type="InterPro" id="IPR001870">
    <property type="entry name" value="B30.2/SPRY"/>
</dbReference>
<dbReference type="InterPro" id="IPR043136">
    <property type="entry name" value="B30.2/SPRY_sf"/>
</dbReference>
<dbReference type="InterPro" id="IPR013320">
    <property type="entry name" value="ConA-like_dom_sf"/>
</dbReference>
<dbReference type="InterPro" id="IPR036047">
    <property type="entry name" value="F-box-like_dom_sf"/>
</dbReference>
<dbReference type="InterPro" id="IPR001810">
    <property type="entry name" value="F-box_dom"/>
</dbReference>
<dbReference type="InterPro" id="IPR050672">
    <property type="entry name" value="FBXO45-Fsn/SPSB_families"/>
</dbReference>
<dbReference type="InterPro" id="IPR003877">
    <property type="entry name" value="SPRY_dom"/>
</dbReference>
<dbReference type="InterPro" id="IPR035784">
    <property type="entry name" value="SPRY_FBXO45"/>
</dbReference>
<dbReference type="PANTHER" id="PTHR12245:SF7">
    <property type="entry name" value="F-BOX_SPRY DOMAIN-CONTAINING PROTEIN 1"/>
    <property type="match status" value="1"/>
</dbReference>
<dbReference type="PANTHER" id="PTHR12245">
    <property type="entry name" value="SPRY DOMAIN CONTAINING SOCS BOX PROTEIN"/>
    <property type="match status" value="1"/>
</dbReference>
<dbReference type="Pfam" id="PF12937">
    <property type="entry name" value="F-box-like"/>
    <property type="match status" value="1"/>
</dbReference>
<dbReference type="Pfam" id="PF00622">
    <property type="entry name" value="SPRY"/>
    <property type="match status" value="1"/>
</dbReference>
<dbReference type="SMART" id="SM00256">
    <property type="entry name" value="FBOX"/>
    <property type="match status" value="1"/>
</dbReference>
<dbReference type="SMART" id="SM00449">
    <property type="entry name" value="SPRY"/>
    <property type="match status" value="1"/>
</dbReference>
<dbReference type="SUPFAM" id="SSF49899">
    <property type="entry name" value="Concanavalin A-like lectins/glucanases"/>
    <property type="match status" value="1"/>
</dbReference>
<dbReference type="SUPFAM" id="SSF81383">
    <property type="entry name" value="F-box domain"/>
    <property type="match status" value="1"/>
</dbReference>
<dbReference type="PROSITE" id="PS50188">
    <property type="entry name" value="B302_SPRY"/>
    <property type="match status" value="1"/>
</dbReference>
<dbReference type="PROSITE" id="PS50181">
    <property type="entry name" value="FBOX"/>
    <property type="match status" value="1"/>
</dbReference>
<sequence>MAAAAINAAAPPPPVAPTAPPPPPPPPLSQASGRLPSRVLELVFSYLDLPDLRSCGLVCKHWYRCLHGDENSEVWRSLCGRIVSEEALRTDILCNLPTYKAKMRAFQHGFSSSDCSRNVYIKKNGFTLHRNPIAQSTDGARTKIGFSEGRHAWEVWWEGPLGTVAVIGIATKRAPMQCQGYVALLGSDDQSWGWNLVDNNLLHNGEVNGSFPQCNNAPKYQIGERIRVILDMEDKTLAFERGYEFLGVAFRGLPKTCLYPAVSAVYGNTEVTLVYLGKPLDG</sequence>
<feature type="chain" id="PRO_0000383746" description="F-box/SPRY domain-containing protein 1">
    <location>
        <begin position="1"/>
        <end position="282"/>
    </location>
</feature>
<feature type="domain" description="F-box" evidence="2">
    <location>
        <begin position="29"/>
        <end position="78"/>
    </location>
</feature>
<feature type="domain" description="B30.2/SPRY" evidence="3">
    <location>
        <begin position="88"/>
        <end position="280"/>
    </location>
</feature>
<feature type="region of interest" description="Disordered" evidence="4">
    <location>
        <begin position="1"/>
        <end position="32"/>
    </location>
</feature>
<feature type="compositionally biased region" description="Pro residues" evidence="4">
    <location>
        <begin position="10"/>
        <end position="28"/>
    </location>
</feature>
<feature type="splice variant" id="VSP_038044" description="In isoform 2." evidence="5">
    <original>IGERIRVILDMEDKTLAFERGYEFLGVAFRGLPKTCLYPAVSAVYGNTEVTLVYLGKPLDG</original>
    <variation>LLQRNRMLDIYFHYVHYLVLVQEITESVGKNR</variation>
    <location>
        <begin position="222"/>
        <end position="282"/>
    </location>
</feature>
<comment type="pathway">
    <text>Protein modification; protein ubiquitination.</text>
</comment>
<comment type="subunit">
    <text evidence="1">Probable component of a E3 ubiquitin ligase complex.</text>
</comment>
<comment type="alternative products">
    <event type="alternative splicing"/>
    <isoform>
        <id>B4F739-1</id>
        <name>1</name>
        <sequence type="displayed"/>
    </isoform>
    <isoform>
        <id>B4F739-2</id>
        <name>2</name>
        <sequence type="described" ref="VSP_038044"/>
    </isoform>
</comment>
<comment type="similarity">
    <text evidence="6">Belongs to the FBXO45/Fsn family.</text>
</comment>
<organism>
    <name type="scientific">Xenopus tropicalis</name>
    <name type="common">Western clawed frog</name>
    <name type="synonym">Silurana tropicalis</name>
    <dbReference type="NCBI Taxonomy" id="8364"/>
    <lineage>
        <taxon>Eukaryota</taxon>
        <taxon>Metazoa</taxon>
        <taxon>Chordata</taxon>
        <taxon>Craniata</taxon>
        <taxon>Vertebrata</taxon>
        <taxon>Euteleostomi</taxon>
        <taxon>Amphibia</taxon>
        <taxon>Batrachia</taxon>
        <taxon>Anura</taxon>
        <taxon>Pipoidea</taxon>
        <taxon>Pipidae</taxon>
        <taxon>Xenopodinae</taxon>
        <taxon>Xenopus</taxon>
        <taxon>Silurana</taxon>
    </lineage>
</organism>
<evidence type="ECO:0000250" key="1"/>
<evidence type="ECO:0000255" key="2">
    <source>
        <dbReference type="PROSITE-ProRule" id="PRU00080"/>
    </source>
</evidence>
<evidence type="ECO:0000255" key="3">
    <source>
        <dbReference type="PROSITE-ProRule" id="PRU00548"/>
    </source>
</evidence>
<evidence type="ECO:0000256" key="4">
    <source>
        <dbReference type="SAM" id="MobiDB-lite"/>
    </source>
</evidence>
<evidence type="ECO:0000303" key="5">
    <source ref="1"/>
</evidence>
<evidence type="ECO:0000305" key="6"/>
<protein>
    <recommendedName>
        <fullName>F-box/SPRY domain-containing protein 1</fullName>
    </recommendedName>
    <alternativeName>
        <fullName>F-box only protein 45</fullName>
    </alternativeName>
</protein>
<keyword id="KW-0025">Alternative splicing</keyword>
<keyword id="KW-1185">Reference proteome</keyword>
<keyword id="KW-0833">Ubl conjugation pathway</keyword>